<feature type="chain" id="PRO_0000357373" description="Enolase-phosphatase E1">
    <location>
        <begin position="1"/>
        <end position="229"/>
    </location>
</feature>
<feature type="region of interest" description="Disordered" evidence="2">
    <location>
        <begin position="206"/>
        <end position="229"/>
    </location>
</feature>
<feature type="compositionally biased region" description="Basic and acidic residues" evidence="2">
    <location>
        <begin position="218"/>
        <end position="229"/>
    </location>
</feature>
<accession>Q48389</accession>
<protein>
    <recommendedName>
        <fullName evidence="1">Enolase-phosphatase E1</fullName>
        <ecNumber evidence="1">3.1.3.77</ecNumber>
    </recommendedName>
    <alternativeName>
        <fullName evidence="1">2,3-diketo-5-methylthio-1-phosphopentane phosphatase</fullName>
    </alternativeName>
</protein>
<name>MTNC_KLEOX</name>
<keyword id="KW-0028">Amino-acid biosynthesis</keyword>
<keyword id="KW-0378">Hydrolase</keyword>
<keyword id="KW-0460">Magnesium</keyword>
<keyword id="KW-0479">Metal-binding</keyword>
<keyword id="KW-0486">Methionine biosynthesis</keyword>
<proteinExistence type="inferred from homology"/>
<gene>
    <name evidence="1" type="primary">mtnC</name>
    <name type="synonym">masA</name>
</gene>
<sequence length="229" mass="25614">MIRAIVTDIEGTTSDIRFVHNVLFPYARERLAGFVTAQQFVEPVKTILDNLREEIAQPAAGAEELIATLFAFMDEDRKSTALKALQGIIWRDGYVHGDFTGHLYPDVLPALEKWKSQGIDLYVYSSGSVAAQKLLFGYSDEGDITHLFNGYFDTLVGAKREAQSYRNIAEQLGQPPAAILFLSDIHQELDAAEEAGFRTLQLVRGDRDPASHHPQVQRFDDIHPEQIPA</sequence>
<organism>
    <name type="scientific">Klebsiella oxytoca</name>
    <dbReference type="NCBI Taxonomy" id="571"/>
    <lineage>
        <taxon>Bacteria</taxon>
        <taxon>Pseudomonadati</taxon>
        <taxon>Pseudomonadota</taxon>
        <taxon>Gammaproteobacteria</taxon>
        <taxon>Enterobacterales</taxon>
        <taxon>Enterobacteriaceae</taxon>
        <taxon>Klebsiella/Raoultella group</taxon>
        <taxon>Klebsiella</taxon>
    </lineage>
</organism>
<reference key="1">
    <citation type="journal article" date="1993" name="J. Biol. Chem.">
        <title>Appendix. Cloning and sequence of the gene encoding enzyme E-1 from the methionine salvage pathway of Klebsiella oxytoca.</title>
        <authorList>
            <person name="Balakrishnan R."/>
            <person name="Frohlich M."/>
            <person name="Rahaim P.T."/>
            <person name="Backman K."/>
            <person name="Yocum R.R."/>
        </authorList>
    </citation>
    <scope>NUCLEOTIDE SEQUENCE [GENOMIC DNA]</scope>
    <source>
        <strain>M5a1</strain>
    </source>
</reference>
<reference key="2">
    <citation type="journal article" date="2004" name="BMC Microbiol.">
        <title>Bacterial variations on the methionine salvage pathway.</title>
        <authorList>
            <person name="Sekowska A."/>
            <person name="Denervaud V."/>
            <person name="Ashida H."/>
            <person name="Michoud K."/>
            <person name="Haas D."/>
            <person name="Yokota A."/>
            <person name="Danchin A."/>
        </authorList>
    </citation>
    <scope>NOMENCLATURE</scope>
</reference>
<evidence type="ECO:0000255" key="1">
    <source>
        <dbReference type="HAMAP-Rule" id="MF_01681"/>
    </source>
</evidence>
<evidence type="ECO:0000256" key="2">
    <source>
        <dbReference type="SAM" id="MobiDB-lite"/>
    </source>
</evidence>
<comment type="function">
    <text evidence="1">Bifunctional enzyme that catalyzes the enolization of 2,3-diketo-5-methylthiopentyl-1-phosphate (DK-MTP-1-P) into the intermediate 2-hydroxy-3-keto-5-methylthiopentenyl-1-phosphate (HK-MTPenyl-1-P), which is then dephosphorylated to form the acireductone 1,2-dihydroxy-3-keto-5-methylthiopentene (DHK-MTPene).</text>
</comment>
<comment type="catalytic activity">
    <reaction evidence="1">
        <text>5-methylsulfanyl-2,3-dioxopentyl phosphate + H2O = 1,2-dihydroxy-5-(methylsulfanyl)pent-1-en-3-one + phosphate</text>
        <dbReference type="Rhea" id="RHEA:21700"/>
        <dbReference type="ChEBI" id="CHEBI:15377"/>
        <dbReference type="ChEBI" id="CHEBI:43474"/>
        <dbReference type="ChEBI" id="CHEBI:49252"/>
        <dbReference type="ChEBI" id="CHEBI:58828"/>
        <dbReference type="EC" id="3.1.3.77"/>
    </reaction>
</comment>
<comment type="cofactor">
    <cofactor evidence="1">
        <name>Mg(2+)</name>
        <dbReference type="ChEBI" id="CHEBI:18420"/>
    </cofactor>
    <text evidence="1">Binds 1 Mg(2+) ion per subunit.</text>
</comment>
<comment type="pathway">
    <text evidence="1">Amino-acid biosynthesis; L-methionine biosynthesis via salvage pathway; L-methionine from S-methyl-5-thio-alpha-D-ribose 1-phosphate: step 3/6.</text>
</comment>
<comment type="pathway">
    <text evidence="1">Amino-acid biosynthesis; L-methionine biosynthesis via salvage pathway; L-methionine from S-methyl-5-thio-alpha-D-ribose 1-phosphate: step 4/6.</text>
</comment>
<comment type="subunit">
    <text evidence="1">Monomer.</text>
</comment>
<comment type="similarity">
    <text evidence="1">Belongs to the HAD-like hydrolase superfamily. MasA/MtnC family.</text>
</comment>
<dbReference type="EC" id="3.1.3.77" evidence="1"/>
<dbReference type="EMBL" id="U00148">
    <property type="protein sequence ID" value="AAC43183.1"/>
    <property type="molecule type" value="Unassigned_DNA"/>
</dbReference>
<dbReference type="PIR" id="A49101">
    <property type="entry name" value="A49101"/>
</dbReference>
<dbReference type="BMRB" id="Q48389"/>
<dbReference type="SMR" id="Q48389"/>
<dbReference type="STRING" id="571.AB185_28065"/>
<dbReference type="eggNOG" id="COG4229">
    <property type="taxonomic scope" value="Bacteria"/>
</dbReference>
<dbReference type="BioCyc" id="MetaCyc:MONOMER-1331"/>
<dbReference type="UniPathway" id="UPA00904">
    <property type="reaction ID" value="UER00876"/>
</dbReference>
<dbReference type="UniPathway" id="UPA00904">
    <property type="reaction ID" value="UER00877"/>
</dbReference>
<dbReference type="GO" id="GO:0043715">
    <property type="term" value="F:2,3-diketo-5-methylthiopentyl-1-phosphate enolase activity"/>
    <property type="evidence" value="ECO:0007669"/>
    <property type="project" value="UniProtKB-UniRule"/>
</dbReference>
<dbReference type="GO" id="GO:0043716">
    <property type="term" value="F:2-hydroxy-3-keto-5-methylthiopentenyl-1-phosphate phosphatase activity"/>
    <property type="evidence" value="ECO:0007669"/>
    <property type="project" value="UniProtKB-UniRule"/>
</dbReference>
<dbReference type="GO" id="GO:0043874">
    <property type="term" value="F:acireductone synthase activity"/>
    <property type="evidence" value="ECO:0007669"/>
    <property type="project" value="UniProtKB-EC"/>
</dbReference>
<dbReference type="GO" id="GO:0000287">
    <property type="term" value="F:magnesium ion binding"/>
    <property type="evidence" value="ECO:0007669"/>
    <property type="project" value="UniProtKB-UniRule"/>
</dbReference>
<dbReference type="GO" id="GO:0019509">
    <property type="term" value="P:L-methionine salvage from methylthioadenosine"/>
    <property type="evidence" value="ECO:0007669"/>
    <property type="project" value="UniProtKB-UniRule"/>
</dbReference>
<dbReference type="CDD" id="cd01629">
    <property type="entry name" value="HAD_EP"/>
    <property type="match status" value="1"/>
</dbReference>
<dbReference type="FunFam" id="3.40.50.1000:FF:000079">
    <property type="entry name" value="Enolase-phosphatase E1"/>
    <property type="match status" value="1"/>
</dbReference>
<dbReference type="Gene3D" id="1.10.720.60">
    <property type="match status" value="1"/>
</dbReference>
<dbReference type="Gene3D" id="3.40.50.1000">
    <property type="entry name" value="HAD superfamily/HAD-like"/>
    <property type="match status" value="1"/>
</dbReference>
<dbReference type="HAMAP" id="MF_01681">
    <property type="entry name" value="Salvage_MtnC"/>
    <property type="match status" value="1"/>
</dbReference>
<dbReference type="InterPro" id="IPR023943">
    <property type="entry name" value="Enolase-ppase_E1"/>
</dbReference>
<dbReference type="InterPro" id="IPR036412">
    <property type="entry name" value="HAD-like_sf"/>
</dbReference>
<dbReference type="InterPro" id="IPR006439">
    <property type="entry name" value="HAD-SF_hydro_IA"/>
</dbReference>
<dbReference type="InterPro" id="IPR023214">
    <property type="entry name" value="HAD_sf"/>
</dbReference>
<dbReference type="NCBIfam" id="TIGR01691">
    <property type="entry name" value="enolase-ppase"/>
    <property type="match status" value="1"/>
</dbReference>
<dbReference type="NCBIfam" id="TIGR01549">
    <property type="entry name" value="HAD-SF-IA-v1"/>
    <property type="match status" value="1"/>
</dbReference>
<dbReference type="PANTHER" id="PTHR20371">
    <property type="entry name" value="ENOLASE-PHOSPHATASE E1"/>
    <property type="match status" value="1"/>
</dbReference>
<dbReference type="PANTHER" id="PTHR20371:SF1">
    <property type="entry name" value="ENOLASE-PHOSPHATASE E1"/>
    <property type="match status" value="1"/>
</dbReference>
<dbReference type="Pfam" id="PF00702">
    <property type="entry name" value="Hydrolase"/>
    <property type="match status" value="1"/>
</dbReference>
<dbReference type="PRINTS" id="PR00413">
    <property type="entry name" value="HADHALOGNASE"/>
</dbReference>
<dbReference type="SFLD" id="SFLDF00044">
    <property type="entry name" value="enolase-phosphatase"/>
    <property type="match status" value="1"/>
</dbReference>
<dbReference type="SFLD" id="SFLDS00003">
    <property type="entry name" value="Haloacid_Dehalogenase"/>
    <property type="match status" value="1"/>
</dbReference>
<dbReference type="SUPFAM" id="SSF56784">
    <property type="entry name" value="HAD-like"/>
    <property type="match status" value="1"/>
</dbReference>